<feature type="chain" id="PRO_1000131749" description="Co-chaperone protein HscB">
    <location>
        <begin position="1"/>
        <end position="171"/>
    </location>
</feature>
<feature type="domain" description="J" evidence="1">
    <location>
        <begin position="2"/>
        <end position="74"/>
    </location>
</feature>
<organism>
    <name type="scientific">Salmonella dublin (strain CT_02021853)</name>
    <dbReference type="NCBI Taxonomy" id="439851"/>
    <lineage>
        <taxon>Bacteria</taxon>
        <taxon>Pseudomonadati</taxon>
        <taxon>Pseudomonadota</taxon>
        <taxon>Gammaproteobacteria</taxon>
        <taxon>Enterobacterales</taxon>
        <taxon>Enterobacteriaceae</taxon>
        <taxon>Salmonella</taxon>
    </lineage>
</organism>
<protein>
    <recommendedName>
        <fullName evidence="1">Co-chaperone protein HscB</fullName>
    </recommendedName>
    <alternativeName>
        <fullName evidence="1">Hsc20</fullName>
    </alternativeName>
</protein>
<dbReference type="EMBL" id="CP001144">
    <property type="protein sequence ID" value="ACH75992.1"/>
    <property type="molecule type" value="Genomic_DNA"/>
</dbReference>
<dbReference type="RefSeq" id="WP_000384398.1">
    <property type="nucleotide sequence ID" value="NC_011205.1"/>
</dbReference>
<dbReference type="SMR" id="B5FR82"/>
<dbReference type="KEGG" id="sed:SeD_A2914"/>
<dbReference type="HOGENOM" id="CLU_068529_2_0_6"/>
<dbReference type="Proteomes" id="UP000008322">
    <property type="component" value="Chromosome"/>
</dbReference>
<dbReference type="GO" id="GO:1990230">
    <property type="term" value="C:iron-sulfur cluster transfer complex"/>
    <property type="evidence" value="ECO:0007669"/>
    <property type="project" value="TreeGrafter"/>
</dbReference>
<dbReference type="GO" id="GO:0001671">
    <property type="term" value="F:ATPase activator activity"/>
    <property type="evidence" value="ECO:0007669"/>
    <property type="project" value="InterPro"/>
</dbReference>
<dbReference type="GO" id="GO:0051087">
    <property type="term" value="F:protein-folding chaperone binding"/>
    <property type="evidence" value="ECO:0007669"/>
    <property type="project" value="InterPro"/>
</dbReference>
<dbReference type="GO" id="GO:0044571">
    <property type="term" value="P:[2Fe-2S] cluster assembly"/>
    <property type="evidence" value="ECO:0007669"/>
    <property type="project" value="InterPro"/>
</dbReference>
<dbReference type="GO" id="GO:0051259">
    <property type="term" value="P:protein complex oligomerization"/>
    <property type="evidence" value="ECO:0007669"/>
    <property type="project" value="InterPro"/>
</dbReference>
<dbReference type="GO" id="GO:0006457">
    <property type="term" value="P:protein folding"/>
    <property type="evidence" value="ECO:0007669"/>
    <property type="project" value="UniProtKB-UniRule"/>
</dbReference>
<dbReference type="CDD" id="cd06257">
    <property type="entry name" value="DnaJ"/>
    <property type="match status" value="1"/>
</dbReference>
<dbReference type="FunFam" id="1.10.287.110:FF:000008">
    <property type="entry name" value="Co-chaperone protein HscB"/>
    <property type="match status" value="1"/>
</dbReference>
<dbReference type="FunFam" id="1.20.1280.20:FF:000001">
    <property type="entry name" value="Co-chaperone protein HscB"/>
    <property type="match status" value="1"/>
</dbReference>
<dbReference type="Gene3D" id="1.10.287.110">
    <property type="entry name" value="DnaJ domain"/>
    <property type="match status" value="1"/>
</dbReference>
<dbReference type="Gene3D" id="1.20.1280.20">
    <property type="entry name" value="HscB, C-terminal domain"/>
    <property type="match status" value="1"/>
</dbReference>
<dbReference type="HAMAP" id="MF_00682">
    <property type="entry name" value="HscB"/>
    <property type="match status" value="1"/>
</dbReference>
<dbReference type="InterPro" id="IPR001623">
    <property type="entry name" value="DnaJ_domain"/>
</dbReference>
<dbReference type="InterPro" id="IPR004640">
    <property type="entry name" value="HscB"/>
</dbReference>
<dbReference type="InterPro" id="IPR036386">
    <property type="entry name" value="HscB_C_sf"/>
</dbReference>
<dbReference type="InterPro" id="IPR009073">
    <property type="entry name" value="HscB_oligo_C"/>
</dbReference>
<dbReference type="InterPro" id="IPR036869">
    <property type="entry name" value="J_dom_sf"/>
</dbReference>
<dbReference type="NCBIfam" id="TIGR00714">
    <property type="entry name" value="hscB"/>
    <property type="match status" value="1"/>
</dbReference>
<dbReference type="NCBIfam" id="NF003449">
    <property type="entry name" value="PRK05014.1"/>
    <property type="match status" value="1"/>
</dbReference>
<dbReference type="PANTHER" id="PTHR14021">
    <property type="entry name" value="IRON-SULFUR CLUSTER CO-CHAPERONE PROTEIN HSCB"/>
    <property type="match status" value="1"/>
</dbReference>
<dbReference type="PANTHER" id="PTHR14021:SF15">
    <property type="entry name" value="IRON-SULFUR CLUSTER CO-CHAPERONE PROTEIN HSCB"/>
    <property type="match status" value="1"/>
</dbReference>
<dbReference type="Pfam" id="PF07743">
    <property type="entry name" value="HSCB_C"/>
    <property type="match status" value="1"/>
</dbReference>
<dbReference type="SMART" id="SM00271">
    <property type="entry name" value="DnaJ"/>
    <property type="match status" value="1"/>
</dbReference>
<dbReference type="SUPFAM" id="SSF46565">
    <property type="entry name" value="Chaperone J-domain"/>
    <property type="match status" value="1"/>
</dbReference>
<dbReference type="SUPFAM" id="SSF47144">
    <property type="entry name" value="HSC20 (HSCB), C-terminal oligomerisation domain"/>
    <property type="match status" value="1"/>
</dbReference>
<dbReference type="PROSITE" id="PS50076">
    <property type="entry name" value="DNAJ_2"/>
    <property type="match status" value="1"/>
</dbReference>
<name>HSCB_SALDC</name>
<reference key="1">
    <citation type="journal article" date="2011" name="J. Bacteriol.">
        <title>Comparative genomics of 28 Salmonella enterica isolates: evidence for CRISPR-mediated adaptive sublineage evolution.</title>
        <authorList>
            <person name="Fricke W.F."/>
            <person name="Mammel M.K."/>
            <person name="McDermott P.F."/>
            <person name="Tartera C."/>
            <person name="White D.G."/>
            <person name="Leclerc J.E."/>
            <person name="Ravel J."/>
            <person name="Cebula T.A."/>
        </authorList>
    </citation>
    <scope>NUCLEOTIDE SEQUENCE [LARGE SCALE GENOMIC DNA]</scope>
    <source>
        <strain>CT_02021853</strain>
    </source>
</reference>
<comment type="function">
    <text evidence="1">Co-chaperone involved in the maturation of iron-sulfur cluster-containing proteins. Seems to help targeting proteins to be folded toward HscA.</text>
</comment>
<comment type="subunit">
    <text evidence="1">Interacts with HscA and stimulates its ATPase activity. Interacts with IscU.</text>
</comment>
<comment type="similarity">
    <text evidence="1">Belongs to the HscB family.</text>
</comment>
<sequence>MDYFTLFGLPARYQIDTQALSLRFQDLQRQYHPDKFANGTQAQQLAAVQQSATINQAWQTLRHPLTRAEYLLSLHGFDLASEQHTVRDTAFLMEQLTLREELDDIEQSKDDVRLESFIKRVQKMFDARLQQMVEQLDNAAWDAAADTVRKLRFLDKLRSSAEQLEEKLLDF</sequence>
<accession>B5FR82</accession>
<proteinExistence type="inferred from homology"/>
<gene>
    <name evidence="1" type="primary">hscB</name>
    <name type="ordered locus">SeD_A2914</name>
</gene>
<keyword id="KW-0143">Chaperone</keyword>
<evidence type="ECO:0000255" key="1">
    <source>
        <dbReference type="HAMAP-Rule" id="MF_00682"/>
    </source>
</evidence>